<keyword id="KW-0030">Aminoacyl-tRNA synthetase</keyword>
<keyword id="KW-0067">ATP-binding</keyword>
<keyword id="KW-0963">Cytoplasm</keyword>
<keyword id="KW-0436">Ligase</keyword>
<keyword id="KW-0547">Nucleotide-binding</keyword>
<keyword id="KW-0648">Protein biosynthesis</keyword>
<protein>
    <recommendedName>
        <fullName evidence="1">Proline--tRNA ligase</fullName>
        <ecNumber evidence="1">6.1.1.15</ecNumber>
    </recommendedName>
    <alternativeName>
        <fullName evidence="1">Prolyl-tRNA synthetase</fullName>
        <shortName evidence="1">ProRS</shortName>
    </alternativeName>
</protein>
<organism>
    <name type="scientific">Parasynechococcus marenigrum (strain WH8102)</name>
    <dbReference type="NCBI Taxonomy" id="84588"/>
    <lineage>
        <taxon>Bacteria</taxon>
        <taxon>Bacillati</taxon>
        <taxon>Cyanobacteriota</taxon>
        <taxon>Cyanophyceae</taxon>
        <taxon>Synechococcales</taxon>
        <taxon>Prochlorococcaceae</taxon>
        <taxon>Parasynechococcus</taxon>
        <taxon>Parasynechococcus marenigrum</taxon>
    </lineage>
</organism>
<sequence>MRVSRLMLVTLRDVPAEAEITSHQLLLRGGFIRRVGSGIYAYLPMMWKVLQRITTIIREEMNRAGALETLLPQLHPSELWQRSGRWQGYTAGEGIMFHLEDRQGRELGLGPTHEEVITSLAGELLRSYRQLPVNLYQVQTKFRDEIRPRFGLMRGREFIMKDAYSFHADEADLQATYAVMDQAYRRIFERCGLEAVPVDADSGAIGGAASQEFMVTAEAGEDLILISDDGAYAANQEKAVSIPDAVASLPPAALTLLKTPGQTTIEGLCTAQAWQPGQLVKVLLLLAQLEDGQQQPVLVSLRGDQDLNEVKLVNAVSRRSEQGVLDCRPISPDDLQRQGINTIPFGFIGPDLADKVLADASSWTTSFLRLADTTATELEQFHCGANAEDQHRSHCSWGDLGGAPQGEDLRKARAGERCVHNPDARLQEKRGIEVGHIFQLGRKYSQALDCCFTNENGRDEPFWMGCYGIGVSRLAQAAVEQHHDDGGIRWPAAIAPYEVIVVIANNHDDAQTDLGDTVYATLLEAGIDVLLDDRKERAGVKFKDADLIGIPWRLVIGRDAAEGTVELVQRSNREMRKLPHGEAIGELLKALRP</sequence>
<comment type="function">
    <text evidence="1">Catalyzes the attachment of proline to tRNA(Pro) in a two-step reaction: proline is first activated by ATP to form Pro-AMP and then transferred to the acceptor end of tRNA(Pro). As ProRS can inadvertently accommodate and process non-cognate amino acids such as alanine and cysteine, to avoid such errors it has two additional distinct editing activities against alanine. One activity is designated as 'pretransfer' editing and involves the tRNA(Pro)-independent hydrolysis of activated Ala-AMP. The other activity is designated 'posttransfer' editing and involves deacylation of mischarged Ala-tRNA(Pro). The misacylated Cys-tRNA(Pro) is not edited by ProRS.</text>
</comment>
<comment type="catalytic activity">
    <reaction evidence="1">
        <text>tRNA(Pro) + L-proline + ATP = L-prolyl-tRNA(Pro) + AMP + diphosphate</text>
        <dbReference type="Rhea" id="RHEA:14305"/>
        <dbReference type="Rhea" id="RHEA-COMP:9700"/>
        <dbReference type="Rhea" id="RHEA-COMP:9702"/>
        <dbReference type="ChEBI" id="CHEBI:30616"/>
        <dbReference type="ChEBI" id="CHEBI:33019"/>
        <dbReference type="ChEBI" id="CHEBI:60039"/>
        <dbReference type="ChEBI" id="CHEBI:78442"/>
        <dbReference type="ChEBI" id="CHEBI:78532"/>
        <dbReference type="ChEBI" id="CHEBI:456215"/>
        <dbReference type="EC" id="6.1.1.15"/>
    </reaction>
</comment>
<comment type="subunit">
    <text evidence="1">Homodimer.</text>
</comment>
<comment type="subcellular location">
    <subcellularLocation>
        <location evidence="1">Cytoplasm</location>
    </subcellularLocation>
</comment>
<comment type="domain">
    <text evidence="1">Consists of three domains: the N-terminal catalytic domain, the editing domain and the C-terminal anticodon-binding domain.</text>
</comment>
<comment type="similarity">
    <text evidence="1">Belongs to the class-II aminoacyl-tRNA synthetase family. ProS type 1 subfamily.</text>
</comment>
<evidence type="ECO:0000255" key="1">
    <source>
        <dbReference type="HAMAP-Rule" id="MF_01569"/>
    </source>
</evidence>
<accession>Q7U5D6</accession>
<proteinExistence type="inferred from homology"/>
<gene>
    <name evidence="1" type="primary">proS</name>
    <name type="ordered locus">SYNW1771</name>
</gene>
<reference key="1">
    <citation type="journal article" date="2003" name="Nature">
        <title>The genome of a motile marine Synechococcus.</title>
        <authorList>
            <person name="Palenik B."/>
            <person name="Brahamsha B."/>
            <person name="Larimer F.W."/>
            <person name="Land M.L."/>
            <person name="Hauser L."/>
            <person name="Chain P."/>
            <person name="Lamerdin J.E."/>
            <person name="Regala W."/>
            <person name="Allen E.E."/>
            <person name="McCarren J."/>
            <person name="Paulsen I.T."/>
            <person name="Dufresne A."/>
            <person name="Partensky F."/>
            <person name="Webb E.A."/>
            <person name="Waterbury J."/>
        </authorList>
    </citation>
    <scope>NUCLEOTIDE SEQUENCE [LARGE SCALE GENOMIC DNA]</scope>
    <source>
        <strain>WH8102</strain>
    </source>
</reference>
<dbReference type="EC" id="6.1.1.15" evidence="1"/>
<dbReference type="EMBL" id="BX569693">
    <property type="protein sequence ID" value="CAE08286.1"/>
    <property type="molecule type" value="Genomic_DNA"/>
</dbReference>
<dbReference type="RefSeq" id="WP_011128631.1">
    <property type="nucleotide sequence ID" value="NC_005070.1"/>
</dbReference>
<dbReference type="SMR" id="Q7U5D6"/>
<dbReference type="STRING" id="84588.SYNW1771"/>
<dbReference type="KEGG" id="syw:SYNW1771"/>
<dbReference type="eggNOG" id="COG0442">
    <property type="taxonomic scope" value="Bacteria"/>
</dbReference>
<dbReference type="HOGENOM" id="CLU_016739_0_0_3"/>
<dbReference type="Proteomes" id="UP000001422">
    <property type="component" value="Chromosome"/>
</dbReference>
<dbReference type="GO" id="GO:0005829">
    <property type="term" value="C:cytosol"/>
    <property type="evidence" value="ECO:0007669"/>
    <property type="project" value="TreeGrafter"/>
</dbReference>
<dbReference type="GO" id="GO:0002161">
    <property type="term" value="F:aminoacyl-tRNA deacylase activity"/>
    <property type="evidence" value="ECO:0007669"/>
    <property type="project" value="InterPro"/>
</dbReference>
<dbReference type="GO" id="GO:0005524">
    <property type="term" value="F:ATP binding"/>
    <property type="evidence" value="ECO:0007669"/>
    <property type="project" value="UniProtKB-UniRule"/>
</dbReference>
<dbReference type="GO" id="GO:0004827">
    <property type="term" value="F:proline-tRNA ligase activity"/>
    <property type="evidence" value="ECO:0007669"/>
    <property type="project" value="UniProtKB-UniRule"/>
</dbReference>
<dbReference type="GO" id="GO:0006433">
    <property type="term" value="P:prolyl-tRNA aminoacylation"/>
    <property type="evidence" value="ECO:0007669"/>
    <property type="project" value="UniProtKB-UniRule"/>
</dbReference>
<dbReference type="CDD" id="cd04334">
    <property type="entry name" value="ProRS-INS"/>
    <property type="match status" value="1"/>
</dbReference>
<dbReference type="CDD" id="cd00861">
    <property type="entry name" value="ProRS_anticodon_short"/>
    <property type="match status" value="1"/>
</dbReference>
<dbReference type="CDD" id="cd00779">
    <property type="entry name" value="ProRS_core_prok"/>
    <property type="match status" value="1"/>
</dbReference>
<dbReference type="Gene3D" id="3.40.50.800">
    <property type="entry name" value="Anticodon-binding domain"/>
    <property type="match status" value="1"/>
</dbReference>
<dbReference type="Gene3D" id="3.30.930.10">
    <property type="entry name" value="Bira Bifunctional Protein, Domain 2"/>
    <property type="match status" value="2"/>
</dbReference>
<dbReference type="Gene3D" id="3.90.960.10">
    <property type="entry name" value="YbaK/aminoacyl-tRNA synthetase-associated domain"/>
    <property type="match status" value="1"/>
</dbReference>
<dbReference type="HAMAP" id="MF_01569">
    <property type="entry name" value="Pro_tRNA_synth_type1"/>
    <property type="match status" value="1"/>
</dbReference>
<dbReference type="InterPro" id="IPR002314">
    <property type="entry name" value="aa-tRNA-synt_IIb"/>
</dbReference>
<dbReference type="InterPro" id="IPR006195">
    <property type="entry name" value="aa-tRNA-synth_II"/>
</dbReference>
<dbReference type="InterPro" id="IPR045864">
    <property type="entry name" value="aa-tRNA-synth_II/BPL/LPL"/>
</dbReference>
<dbReference type="InterPro" id="IPR004154">
    <property type="entry name" value="Anticodon-bd"/>
</dbReference>
<dbReference type="InterPro" id="IPR036621">
    <property type="entry name" value="Anticodon-bd_dom_sf"/>
</dbReference>
<dbReference type="InterPro" id="IPR002316">
    <property type="entry name" value="Pro-tRNA-ligase_IIa"/>
</dbReference>
<dbReference type="InterPro" id="IPR004500">
    <property type="entry name" value="Pro-tRNA-synth_IIa_bac-type"/>
</dbReference>
<dbReference type="InterPro" id="IPR023717">
    <property type="entry name" value="Pro-tRNA-Synthase_IIa_type1"/>
</dbReference>
<dbReference type="InterPro" id="IPR050062">
    <property type="entry name" value="Pro-tRNA_synthetase"/>
</dbReference>
<dbReference type="InterPro" id="IPR044140">
    <property type="entry name" value="ProRS_anticodon_short"/>
</dbReference>
<dbReference type="InterPro" id="IPR033730">
    <property type="entry name" value="ProRS_core_prok"/>
</dbReference>
<dbReference type="InterPro" id="IPR036754">
    <property type="entry name" value="YbaK/aa-tRNA-synt-asso_dom_sf"/>
</dbReference>
<dbReference type="InterPro" id="IPR007214">
    <property type="entry name" value="YbaK/aa-tRNA-synth-assoc-dom"/>
</dbReference>
<dbReference type="NCBIfam" id="NF006625">
    <property type="entry name" value="PRK09194.1"/>
    <property type="match status" value="1"/>
</dbReference>
<dbReference type="NCBIfam" id="TIGR00409">
    <property type="entry name" value="proS_fam_II"/>
    <property type="match status" value="1"/>
</dbReference>
<dbReference type="PANTHER" id="PTHR42753">
    <property type="entry name" value="MITOCHONDRIAL RIBOSOME PROTEIN L39/PROLYL-TRNA LIGASE FAMILY MEMBER"/>
    <property type="match status" value="1"/>
</dbReference>
<dbReference type="PANTHER" id="PTHR42753:SF2">
    <property type="entry name" value="PROLINE--TRNA LIGASE"/>
    <property type="match status" value="1"/>
</dbReference>
<dbReference type="Pfam" id="PF03129">
    <property type="entry name" value="HGTP_anticodon"/>
    <property type="match status" value="1"/>
</dbReference>
<dbReference type="Pfam" id="PF00587">
    <property type="entry name" value="tRNA-synt_2b"/>
    <property type="match status" value="1"/>
</dbReference>
<dbReference type="Pfam" id="PF04073">
    <property type="entry name" value="tRNA_edit"/>
    <property type="match status" value="1"/>
</dbReference>
<dbReference type="PRINTS" id="PR01046">
    <property type="entry name" value="TRNASYNTHPRO"/>
</dbReference>
<dbReference type="SUPFAM" id="SSF52954">
    <property type="entry name" value="Class II aaRS ABD-related"/>
    <property type="match status" value="1"/>
</dbReference>
<dbReference type="SUPFAM" id="SSF55681">
    <property type="entry name" value="Class II aaRS and biotin synthetases"/>
    <property type="match status" value="1"/>
</dbReference>
<dbReference type="SUPFAM" id="SSF55826">
    <property type="entry name" value="YbaK/ProRS associated domain"/>
    <property type="match status" value="1"/>
</dbReference>
<dbReference type="PROSITE" id="PS50862">
    <property type="entry name" value="AA_TRNA_LIGASE_II"/>
    <property type="match status" value="1"/>
</dbReference>
<feature type="chain" id="PRO_0000248798" description="Proline--tRNA ligase">
    <location>
        <begin position="1"/>
        <end position="593"/>
    </location>
</feature>
<name>SYP_PARMW</name>